<accession>Q83730</accession>
<sequence>MDLYGYVSCTPRIRHDVLDGLLNVYDPDELCSRDTPFRLYLTRYDCTPEGLRLFLTRGADVNGVRGSRTSPLCTVLSNKDLGNEAEALAKQLIDAGADVNAMAPDGRYPLLCLLENDRINTARFVRYMIDRGTSVYVRGTDGYGPVQTYIHSKNVVLDTLRELVRAGATVHDPDKTYGFNVLQCYMIAHVRSSNVQILRFLLRHGVDSSRGLHATVMFNTLERKISHGVFNRKVLDFIFTQISINEQNSLDFTPINYCVIHNDRRTFDYLLERGADPNVVNFLGNSCLDLAVLNGNKYMVHRLLRKTITPDAYTRALNVVNSNIYSIKSYGMSEFVKRHGTLYKALIRSFVKDSDREIFTYVHIYDYFREFVDECIRERDAMKADVLDAVSVFDTAFGLVARPRWKHVRILSKYVRGVYGDRVKKILRSLHKRRFKTDRLVRRIADLCGPDGLWTRLPVEVRYSVVDYLTDDEIHDLFVKIHA</sequence>
<evidence type="ECO:0000269" key="1">
    <source>
    </source>
</evidence>
<evidence type="ECO:0000269" key="2">
    <source>
    </source>
</evidence>
<feature type="chain" id="PRO_0000396527" description="Ankyrin repeat domain-containing protein M-T5">
    <location>
        <begin position="1"/>
        <end position="483"/>
    </location>
</feature>
<feature type="repeat" description="ANK 1">
    <location>
        <begin position="32"/>
        <end position="63"/>
    </location>
</feature>
<feature type="repeat" description="ANK 2">
    <location>
        <begin position="67"/>
        <end position="101"/>
    </location>
</feature>
<feature type="repeat" description="ANK 3">
    <location>
        <begin position="105"/>
        <end position="137"/>
    </location>
</feature>
<feature type="repeat" description="ANK 4">
    <location>
        <begin position="177"/>
        <end position="210"/>
    </location>
</feature>
<feature type="repeat" description="ANK 5">
    <location>
        <begin position="250"/>
        <end position="279"/>
    </location>
</feature>
<feature type="repeat" description="ANK 6">
    <location>
        <begin position="283"/>
        <end position="312"/>
    </location>
</feature>
<feature type="region of interest" description="PRANC/F-box-like">
    <location>
        <begin position="390"/>
        <end position="478"/>
    </location>
</feature>
<keyword id="KW-0040">ANK repeat</keyword>
<keyword id="KW-1077">G0/G1 host cell cycle checkpoint dysregulation by virus</keyword>
<keyword id="KW-0945">Host-virus interaction</keyword>
<keyword id="KW-1121">Modulation of host cell cycle by virus</keyword>
<keyword id="KW-1123">Modulation of host E3 ubiquitin ligases by virus</keyword>
<keyword id="KW-1130">Modulation of host ubiquitin pathway by virus</keyword>
<keyword id="KW-1185">Reference proteome</keyword>
<keyword id="KW-0677">Repeat</keyword>
<keyword id="KW-0833">Ubl conjugation pathway</keyword>
<name>MT5_MYXVL</name>
<protein>
    <recommendedName>
        <fullName>Ankyrin repeat domain-containing protein M-T5</fullName>
    </recommendedName>
    <alternativeName>
        <fullName>M-T5 protein</fullName>
        <shortName>M5</shortName>
    </alternativeName>
</protein>
<reference key="1">
    <citation type="journal article" date="1996" name="J. Virol.">
        <title>Disruption of M-T5, a novel myxoma virus gene member of poxvirus host range superfamily, results in dramatic attenuation of myxomatosis in infected European rabbits.</title>
        <authorList>
            <person name="Mossman K."/>
            <person name="Lee S.F."/>
            <person name="Barry M."/>
            <person name="Boshkov L."/>
            <person name="McFadden G."/>
        </authorList>
    </citation>
    <scope>NUCLEOTIDE SEQUENCE [GENOMIC DNA]</scope>
</reference>
<reference key="2">
    <citation type="journal article" date="1999" name="Virology">
        <title>The complete DNA sequence of myxoma virus.</title>
        <authorList>
            <person name="Cameron C."/>
            <person name="Hota-Mitchell S."/>
            <person name="Chen L."/>
            <person name="Barrett J.W."/>
            <person name="Cao J.-X."/>
            <person name="Macaulay C."/>
            <person name="Willer D.O."/>
            <person name="Evans D.H."/>
            <person name="McFadden G."/>
        </authorList>
    </citation>
    <scope>NUCLEOTIDE SEQUENCE [LARGE SCALE GENOMIC DNA]</scope>
    <source>
        <strain>Lausanne</strain>
    </source>
</reference>
<reference key="3">
    <citation type="journal article" date="2005" name="J. Virol.">
        <title>Myxoma virus M-T5 protects infected cells from the stress of cell cycle arrest through its interaction with host cell cullin-1.</title>
        <authorList>
            <person name="Johnston J.B."/>
            <person name="Wang G."/>
            <person name="Barrett J.W."/>
            <person name="Nazarian S.H."/>
            <person name="Colwill K."/>
            <person name="Moran M."/>
            <person name="McFadden G."/>
        </authorList>
    </citation>
    <scope>FUNCTION</scope>
</reference>
<reference key="4">
    <citation type="journal article" date="2009" name="J. Virol.">
        <title>The myxoma virus m-t5 ankyrin repeat host range protein is a novel adaptor that coordinately links the cellular signaling pathways mediated by Akt and Skp1 in virus-infected cells.</title>
        <authorList>
            <person name="Werden S.J."/>
            <person name="Lanchbury J."/>
            <person name="Shattuck D."/>
            <person name="Neff C."/>
            <person name="Dufford M."/>
            <person name="McFadden G."/>
        </authorList>
    </citation>
    <scope>INTERACTION WITH HOST SKP1 AND AKT1</scope>
</reference>
<comment type="function">
    <text evidence="1">Substrate-specific adapter of SKP1-containing E3 ubiquitin-protein ligases which mediate the ubiquitination and subsequent proteasomal degradation of host target proteins including CDKN1B. Disappearance of host CDKN1B correlates with cell cycle progression through the G0/G1 checkpoint. Therefore, viruses in infected cells are protected from diverse innate host antiviral responses normally triggered by G0/G1 cell cycle arrest.</text>
</comment>
<comment type="subunit">
    <text evidence="2">Interacts (via PRANC/F-box-like domain) with the SKP1 component of the host SCF ubiquitin ligase complex. Interacts (via N-terminus) with host AKT1.</text>
</comment>
<comment type="interaction">
    <interactant intactId="EBI-6859930">
        <id>Q83730</id>
    </interactant>
    <interactant intactId="EBI-296087">
        <id>P31749</id>
        <label>AKT1</label>
    </interactant>
    <organismsDiffer>true</organismsDiffer>
    <experiments>3</experiments>
</comment>
<comment type="interaction">
    <interactant intactId="EBI-6859930">
        <id>Q83730</id>
    </interactant>
    <interactant intactId="EBI-359390">
        <id>Q13616</id>
        <label>CUL1</label>
    </interactant>
    <organismsDiffer>true</organismsDiffer>
    <experiments>5</experiments>
</comment>
<dbReference type="EMBL" id="U43201">
    <property type="protein sequence ID" value="AAC55050.1"/>
    <property type="molecule type" value="Genomic_DNA"/>
</dbReference>
<dbReference type="EMBL" id="AF170726">
    <property type="protein sequence ID" value="AAF14892.1"/>
    <property type="molecule type" value="Genomic_DNA"/>
</dbReference>
<dbReference type="EMBL" id="AF170726">
    <property type="protein sequence ID" value="AAF15051.1"/>
    <property type="molecule type" value="Genomic_DNA"/>
</dbReference>
<dbReference type="RefSeq" id="NP_051718.1">
    <property type="nucleotide sequence ID" value="NC_001132.2"/>
</dbReference>
<dbReference type="RefSeq" id="NP_051874.1">
    <property type="nucleotide sequence ID" value="NC_001132.2"/>
</dbReference>
<dbReference type="SMR" id="Q83730"/>
<dbReference type="DIP" id="DIP-61134N"/>
<dbReference type="IntAct" id="Q83730">
    <property type="interactions" value="2"/>
</dbReference>
<dbReference type="GeneID" id="932059"/>
<dbReference type="GeneID" id="932077"/>
<dbReference type="KEGG" id="vg:932059"/>
<dbReference type="KEGG" id="vg:932077"/>
<dbReference type="Proteomes" id="UP000000867">
    <property type="component" value="Segment"/>
</dbReference>
<dbReference type="GO" id="GO:0039646">
    <property type="term" value="P:symbiont-mediated perturbation of host cell cycle G0/G1 transition checkpoint"/>
    <property type="evidence" value="ECO:0007669"/>
    <property type="project" value="UniProtKB-KW"/>
</dbReference>
<dbReference type="GO" id="GO:0044071">
    <property type="term" value="P:symbiont-mediated perturbation of host cell cycle progression"/>
    <property type="evidence" value="ECO:0007669"/>
    <property type="project" value="UniProtKB-KW"/>
</dbReference>
<dbReference type="GO" id="GO:0039648">
    <property type="term" value="P:symbiont-mediated perturbation of host ubiquitin-like protein modification"/>
    <property type="evidence" value="ECO:0007669"/>
    <property type="project" value="UniProtKB-KW"/>
</dbReference>
<dbReference type="GO" id="GO:0033668">
    <property type="term" value="P:symbiont-mediated suppression of host apoptosis"/>
    <property type="evidence" value="ECO:0000315"/>
    <property type="project" value="CACAO"/>
</dbReference>
<dbReference type="FunFam" id="1.25.40.20:FF:000802">
    <property type="entry name" value="M-T5"/>
    <property type="match status" value="1"/>
</dbReference>
<dbReference type="Gene3D" id="1.25.40.20">
    <property type="entry name" value="Ankyrin repeat-containing domain"/>
    <property type="match status" value="2"/>
</dbReference>
<dbReference type="InterPro" id="IPR002110">
    <property type="entry name" value="Ankyrin_rpt"/>
</dbReference>
<dbReference type="InterPro" id="IPR036770">
    <property type="entry name" value="Ankyrin_rpt-contain_sf"/>
</dbReference>
<dbReference type="InterPro" id="IPR018272">
    <property type="entry name" value="PRANC_domain"/>
</dbReference>
<dbReference type="PANTHER" id="PTHR24198">
    <property type="entry name" value="ANKYRIN REPEAT AND PROTEIN KINASE DOMAIN-CONTAINING PROTEIN"/>
    <property type="match status" value="1"/>
</dbReference>
<dbReference type="PANTHER" id="PTHR24198:SF165">
    <property type="entry name" value="ANKYRIN REPEAT-CONTAINING PROTEIN-RELATED"/>
    <property type="match status" value="1"/>
</dbReference>
<dbReference type="Pfam" id="PF00023">
    <property type="entry name" value="Ank"/>
    <property type="match status" value="1"/>
</dbReference>
<dbReference type="Pfam" id="PF09372">
    <property type="entry name" value="PRANC"/>
    <property type="match status" value="1"/>
</dbReference>
<dbReference type="SMART" id="SM00248">
    <property type="entry name" value="ANK"/>
    <property type="match status" value="7"/>
</dbReference>
<dbReference type="SUPFAM" id="SSF48403">
    <property type="entry name" value="Ankyrin repeat"/>
    <property type="match status" value="1"/>
</dbReference>
<dbReference type="PROSITE" id="PS50297">
    <property type="entry name" value="ANK_REP_REGION"/>
    <property type="match status" value="1"/>
</dbReference>
<gene>
    <name type="primary">m005R</name>
    <name type="synonym">m005L</name>
</gene>
<proteinExistence type="evidence at protein level"/>
<organism>
    <name type="scientific">Myxoma virus (strain Lausanne)</name>
    <name type="common">MYXV</name>
    <dbReference type="NCBI Taxonomy" id="31530"/>
    <lineage>
        <taxon>Viruses</taxon>
        <taxon>Varidnaviria</taxon>
        <taxon>Bamfordvirae</taxon>
        <taxon>Nucleocytoviricota</taxon>
        <taxon>Pokkesviricetes</taxon>
        <taxon>Chitovirales</taxon>
        <taxon>Poxviridae</taxon>
        <taxon>Chordopoxvirinae</taxon>
        <taxon>Leporipoxvirus</taxon>
        <taxon>Myxoma virus</taxon>
    </lineage>
</organism>
<organismHost>
    <name type="scientific">Oryctolagus cuniculus</name>
    <name type="common">Rabbit</name>
    <dbReference type="NCBI Taxonomy" id="9986"/>
</organismHost>